<dbReference type="EC" id="3.6.-.-"/>
<dbReference type="EMBL" id="BA000020">
    <property type="protein sequence ID" value="BAB77109.1"/>
    <property type="status" value="ALT_INIT"/>
    <property type="molecule type" value="Genomic_DNA"/>
</dbReference>
<dbReference type="PIR" id="AG2521">
    <property type="entry name" value="AG2521"/>
</dbReference>
<dbReference type="RefSeq" id="WP_044523685.1">
    <property type="nucleotide sequence ID" value="NZ_RSCN01000082.1"/>
</dbReference>
<dbReference type="SMR" id="Q8YKE7"/>
<dbReference type="KEGG" id="ana:all7351"/>
<dbReference type="OrthoDB" id="517136at2"/>
<dbReference type="Proteomes" id="UP000002483">
    <property type="component" value="Plasmid pCC7120alpha"/>
</dbReference>
<dbReference type="GO" id="GO:0016787">
    <property type="term" value="F:hydrolase activity"/>
    <property type="evidence" value="ECO:0007669"/>
    <property type="project" value="UniProtKB-KW"/>
</dbReference>
<dbReference type="GO" id="GO:0046872">
    <property type="term" value="F:metal ion binding"/>
    <property type="evidence" value="ECO:0007669"/>
    <property type="project" value="UniProtKB-KW"/>
</dbReference>
<dbReference type="CDD" id="cd24154">
    <property type="entry name" value="NUDIX_DR0079"/>
    <property type="match status" value="1"/>
</dbReference>
<dbReference type="Gene3D" id="3.90.79.10">
    <property type="entry name" value="Nucleoside Triphosphate Pyrophosphohydrolase"/>
    <property type="match status" value="1"/>
</dbReference>
<dbReference type="InterPro" id="IPR015797">
    <property type="entry name" value="NUDIX_hydrolase-like_dom_sf"/>
</dbReference>
<dbReference type="InterPro" id="IPR020084">
    <property type="entry name" value="NUDIX_hydrolase_CS"/>
</dbReference>
<dbReference type="InterPro" id="IPR000086">
    <property type="entry name" value="NUDIX_hydrolase_dom"/>
</dbReference>
<dbReference type="PANTHER" id="PTHR10885">
    <property type="entry name" value="ISOPENTENYL-DIPHOSPHATE DELTA-ISOMERASE"/>
    <property type="match status" value="1"/>
</dbReference>
<dbReference type="PANTHER" id="PTHR10885:SF0">
    <property type="entry name" value="ISOPENTENYL-DIPHOSPHATE DELTA-ISOMERASE"/>
    <property type="match status" value="1"/>
</dbReference>
<dbReference type="Pfam" id="PF00293">
    <property type="entry name" value="NUDIX"/>
    <property type="match status" value="1"/>
</dbReference>
<dbReference type="SUPFAM" id="SSF55811">
    <property type="entry name" value="Nudix"/>
    <property type="match status" value="1"/>
</dbReference>
<dbReference type="PROSITE" id="PS51462">
    <property type="entry name" value="NUDIX"/>
    <property type="match status" value="1"/>
</dbReference>
<dbReference type="PROSITE" id="PS00893">
    <property type="entry name" value="NUDIX_BOX"/>
    <property type="match status" value="1"/>
</dbReference>
<feature type="chain" id="PRO_0000057073" description="Uncharacterized Nudix hydrolase all7351">
    <location>
        <begin position="1"/>
        <end position="169"/>
    </location>
</feature>
<feature type="domain" description="Nudix hydrolase" evidence="2">
    <location>
        <begin position="32"/>
        <end position="162"/>
    </location>
</feature>
<feature type="short sequence motif" description="Nudix box">
    <location>
        <begin position="69"/>
        <end position="91"/>
    </location>
</feature>
<feature type="binding site" evidence="1">
    <location>
        <position position="85"/>
    </location>
    <ligand>
        <name>Mg(2+)</name>
        <dbReference type="ChEBI" id="CHEBI:18420"/>
    </ligand>
</feature>
<feature type="binding site" evidence="1">
    <location>
        <position position="89"/>
    </location>
    <ligand>
        <name>Mg(2+)</name>
        <dbReference type="ChEBI" id="CHEBI:18420"/>
    </ligand>
</feature>
<sequence>MMQDLEILDIVDESDCVIGQKKRSEIYSQGLCNFRVVNSFVVNSLGKLWIPRRSAQKRIFPLCLDVSMGGHVESGETYEDALQRELEEELNLDLNMVNTQLLGYLTPYKYQVSAFMKVYEIRLDYEPDYNQNDFIESFWLYPSELIEWLNKGEPAKSDLIKLVQMFYAN</sequence>
<protein>
    <recommendedName>
        <fullName>Uncharacterized Nudix hydrolase all7351</fullName>
        <ecNumber>3.6.-.-</ecNumber>
    </recommendedName>
</protein>
<evidence type="ECO:0000250" key="1"/>
<evidence type="ECO:0000255" key="2">
    <source>
        <dbReference type="PROSITE-ProRule" id="PRU00794"/>
    </source>
</evidence>
<evidence type="ECO:0000305" key="3"/>
<accession>Q8YKE7</accession>
<reference key="1">
    <citation type="journal article" date="2001" name="DNA Res.">
        <title>Complete genomic sequence of the filamentous nitrogen-fixing cyanobacterium Anabaena sp. strain PCC 7120.</title>
        <authorList>
            <person name="Kaneko T."/>
            <person name="Nakamura Y."/>
            <person name="Wolk C.P."/>
            <person name="Kuritz T."/>
            <person name="Sasamoto S."/>
            <person name="Watanabe A."/>
            <person name="Iriguchi M."/>
            <person name="Ishikawa A."/>
            <person name="Kawashima K."/>
            <person name="Kimura T."/>
            <person name="Kishida Y."/>
            <person name="Kohara M."/>
            <person name="Matsumoto M."/>
            <person name="Matsuno A."/>
            <person name="Muraki A."/>
            <person name="Nakazaki N."/>
            <person name="Shimpo S."/>
            <person name="Sugimoto M."/>
            <person name="Takazawa M."/>
            <person name="Yamada M."/>
            <person name="Yasuda M."/>
            <person name="Tabata S."/>
        </authorList>
    </citation>
    <scope>NUCLEOTIDE SEQUENCE [LARGE SCALE GENOMIC DNA]</scope>
    <source>
        <strain>PCC 7120 / SAG 25.82 / UTEX 2576</strain>
    </source>
</reference>
<proteinExistence type="inferred from homology"/>
<organism>
    <name type="scientific">Nostoc sp. (strain PCC 7120 / SAG 25.82 / UTEX 2576)</name>
    <dbReference type="NCBI Taxonomy" id="103690"/>
    <lineage>
        <taxon>Bacteria</taxon>
        <taxon>Bacillati</taxon>
        <taxon>Cyanobacteriota</taxon>
        <taxon>Cyanophyceae</taxon>
        <taxon>Nostocales</taxon>
        <taxon>Nostocaceae</taxon>
        <taxon>Nostoc</taxon>
    </lineage>
</organism>
<name>Y7351_NOSS1</name>
<comment type="cofactor">
    <cofactor evidence="1">
        <name>Mg(2+)</name>
        <dbReference type="ChEBI" id="CHEBI:18420"/>
    </cofactor>
</comment>
<comment type="similarity">
    <text evidence="3">Belongs to the Nudix hydrolase family.</text>
</comment>
<comment type="sequence caution" evidence="3">
    <conflict type="erroneous initiation">
        <sequence resource="EMBL-CDS" id="BAB77109"/>
    </conflict>
</comment>
<gene>
    <name type="ordered locus">all7351</name>
</gene>
<geneLocation type="plasmid">
    <name>pCC7120alpha</name>
</geneLocation>
<keyword id="KW-0378">Hydrolase</keyword>
<keyword id="KW-0460">Magnesium</keyword>
<keyword id="KW-0479">Metal-binding</keyword>
<keyword id="KW-0614">Plasmid</keyword>
<keyword id="KW-1185">Reference proteome</keyword>